<gene>
    <name type="primary">rpo41</name>
    <name type="ORF">SPAC26H5.12</name>
</gene>
<feature type="transit peptide" description="Mitochondrion">
    <location>
        <begin position="1"/>
        <end position="30"/>
    </location>
</feature>
<feature type="chain" id="PRO_0000031077" description="DNA-directed RNA polymerase, mitochondrial">
    <location>
        <begin position="31"/>
        <end position="1154"/>
    </location>
</feature>
<feature type="region of interest" description="Disordered" evidence="4">
    <location>
        <begin position="221"/>
        <end position="243"/>
    </location>
</feature>
<feature type="compositionally biased region" description="Basic and acidic residues" evidence="4">
    <location>
        <begin position="223"/>
        <end position="240"/>
    </location>
</feature>
<feature type="active site" evidence="1">
    <location>
        <position position="821"/>
    </location>
</feature>
<feature type="active site" evidence="1">
    <location>
        <position position="890"/>
    </location>
</feature>
<feature type="active site" evidence="1">
    <location>
        <position position="1061"/>
    </location>
</feature>
<sequence>MLRRKIQTYLSRSHIRRGLCGLRFFQTQRLHTDYMPIEAYEPYKNELKSKIGKDFIIDLSYKSGTASLFEACVYNGDFLRSKQLLKSFIDHNKGDKILLPMINLYIREIIQRGSFELTDVLSNAKELLQQARLNGDSLTYALLCQASLNPTQRQLGLPVLHELIHNWRSANGKVIDILMHESVFSPEEVKLIMDQLNIPINNFTPSQLQLLGITNSTIVGESENGKDQNGDSSLKEKQPDVETTVTKSANLNALRSSLSSLLTESIDLPIDEVSLEFGNQGDTFNLARQKLLEKSAILSAAEVWKSEHESVLNRGNLQVPKNVSSLFYSWYVQLEQLFKEEISLIDDLALNESLDKKNDRLIYGPFLKLLSSKKLAALTIMEVAQLSTNPRYDRGARVTTLLGGLGRSFEREFLSEQIQRQEKNKSYKDKKRLKELFNDPRKFRQAVKNLRLSNTRDNIVLNPSVDSWPSAIVMKVGSVALCLLLSVAKIEVTAKDLSTGGILKQEVAAFVHTYQYSNGRKVGMIVPHVEFYKLLSRDIEKPHLHPQLLPMLVTPKPWTSWIDGGYYYSRQPLVRLKGALEQVDYLMKASENGQLDELFKAVSSLGKVSWRINQRLFNVLIRIWNSGEKFLSIPPREVKCDMPPYPKNSINPRDKVIWHTRRKELAALKTGAHSQRCDFNYKLEIARAFLNEKFYFPHSLDFRGRAYPLSSHLHHVSNDVCRGLLEFSTGKPLGPKGLNWLKVHLANLFGISKKDFATRQAFVDDNMQEVFDSADRPLDGNKWWSKADDPFQALAACFEIAEAVRSGDHESYISHIPIQQDGTCNGLQHYAALGGDIEGAKQVNLWPSDHPSDVYEAVAEIVRGFLKKDAEAGDEMANFLKDKVTRSVVKPTVMTNVYGVTYVGARKQISEKLENIDGMEKLKVADYANYLTKKVFEALRSLFTQAHEIQDWLSACCNLITHSLPADYIKEGIKDELTPVVWTTLLNLPIVQPYRNYKSRQIRTNLQTVFIEERDRTATVQPHKQATAFPPNFIHSLDATHMFMTCLKCSEQNINFAAVHDSYWTHACDVDQMNSLLREAFVLLHSNNIMERLKQEFEERYKGFLVSKKAIKANDEDLKAKFGNKSYIPLEFPPLPARGALDLKKVLESKYFFS</sequence>
<accession>O13993</accession>
<name>RPOM_SCHPO</name>
<comment type="function">
    <text evidence="5">DNA-dependent RNA polymerase catalyzes the transcription of DNA into RNA using the four ribonucleoside triphosphates as substrates. Combines in the mitochondrion with mitochondrial transcription factor mtf1 as a holoenzyme to recognize and initiate transcription at the core mitochondrial promoters.</text>
</comment>
<comment type="catalytic activity">
    <reaction evidence="2 3">
        <text>RNA(n) + a ribonucleoside 5'-triphosphate = RNA(n+1) + diphosphate</text>
        <dbReference type="Rhea" id="RHEA:21248"/>
        <dbReference type="Rhea" id="RHEA-COMP:14527"/>
        <dbReference type="Rhea" id="RHEA-COMP:17342"/>
        <dbReference type="ChEBI" id="CHEBI:33019"/>
        <dbReference type="ChEBI" id="CHEBI:61557"/>
        <dbReference type="ChEBI" id="CHEBI:140395"/>
        <dbReference type="EC" id="2.7.7.6"/>
    </reaction>
</comment>
<comment type="subcellular location">
    <subcellularLocation>
        <location>Mitochondrion</location>
    </subcellularLocation>
</comment>
<comment type="similarity">
    <text evidence="6">Belongs to the phage and mitochondrial RNA polymerase family.</text>
</comment>
<proteinExistence type="inferred from homology"/>
<dbReference type="EC" id="2.7.7.6"/>
<dbReference type="EMBL" id="CU329670">
    <property type="protein sequence ID" value="CAB16197.2"/>
    <property type="molecule type" value="Genomic_DNA"/>
</dbReference>
<dbReference type="PIR" id="T38431">
    <property type="entry name" value="T38431"/>
</dbReference>
<dbReference type="RefSeq" id="NP_594459.2">
    <property type="nucleotide sequence ID" value="NM_001019888.2"/>
</dbReference>
<dbReference type="SMR" id="O13993"/>
<dbReference type="BioGRID" id="279140">
    <property type="interactions" value="3"/>
</dbReference>
<dbReference type="FunCoup" id="O13993">
    <property type="interactions" value="143"/>
</dbReference>
<dbReference type="STRING" id="284812.O13993"/>
<dbReference type="iPTMnet" id="O13993"/>
<dbReference type="PaxDb" id="4896-SPAC26H5.12.1"/>
<dbReference type="EnsemblFungi" id="SPAC26H5.12.1">
    <property type="protein sequence ID" value="SPAC26H5.12.1:pep"/>
    <property type="gene ID" value="SPAC26H5.12"/>
</dbReference>
<dbReference type="GeneID" id="2542687"/>
<dbReference type="KEGG" id="spo:2542687"/>
<dbReference type="PomBase" id="SPAC26H5.12">
    <property type="gene designation" value="rpo41"/>
</dbReference>
<dbReference type="VEuPathDB" id="FungiDB:SPAC26H5.12"/>
<dbReference type="eggNOG" id="KOG1038">
    <property type="taxonomic scope" value="Eukaryota"/>
</dbReference>
<dbReference type="HOGENOM" id="CLU_003364_1_0_1"/>
<dbReference type="InParanoid" id="O13993"/>
<dbReference type="OMA" id="KWFEVDM"/>
<dbReference type="Reactome" id="R-SPO-163282">
    <property type="pathway name" value="Mitochondrial transcription initiation"/>
</dbReference>
<dbReference type="PRO" id="PR:O13993"/>
<dbReference type="Proteomes" id="UP000002485">
    <property type="component" value="Chromosome I"/>
</dbReference>
<dbReference type="GO" id="GO:0005737">
    <property type="term" value="C:cytoplasm"/>
    <property type="evidence" value="ECO:0007005"/>
    <property type="project" value="PomBase"/>
</dbReference>
<dbReference type="GO" id="GO:0005829">
    <property type="term" value="C:cytosol"/>
    <property type="evidence" value="ECO:0007005"/>
    <property type="project" value="PomBase"/>
</dbReference>
<dbReference type="GO" id="GO:0034245">
    <property type="term" value="C:mitochondrial DNA-directed RNA polymerase complex"/>
    <property type="evidence" value="ECO:0000314"/>
    <property type="project" value="PomBase"/>
</dbReference>
<dbReference type="GO" id="GO:0005759">
    <property type="term" value="C:mitochondrial matrix"/>
    <property type="evidence" value="ECO:0000250"/>
    <property type="project" value="PomBase"/>
</dbReference>
<dbReference type="GO" id="GO:0005739">
    <property type="term" value="C:mitochondrion"/>
    <property type="evidence" value="ECO:0000314"/>
    <property type="project" value="PomBase"/>
</dbReference>
<dbReference type="GO" id="GO:0003899">
    <property type="term" value="F:DNA-directed RNA polymerase activity"/>
    <property type="evidence" value="ECO:0000269"/>
    <property type="project" value="PomBase"/>
</dbReference>
<dbReference type="GO" id="GO:0001018">
    <property type="term" value="F:mitochondrial promoter sequence-specific DNA binding"/>
    <property type="evidence" value="ECO:0000269"/>
    <property type="project" value="PomBase"/>
</dbReference>
<dbReference type="GO" id="GO:0006390">
    <property type="term" value="P:mitochondrial transcription"/>
    <property type="evidence" value="ECO:0000318"/>
    <property type="project" value="GO_Central"/>
</dbReference>
<dbReference type="GO" id="GO:0006391">
    <property type="term" value="P:transcription initiation at mitochondrial promoter"/>
    <property type="evidence" value="ECO:0000315"/>
    <property type="project" value="PomBase"/>
</dbReference>
<dbReference type="FunFam" id="1.10.1320.10:FF:000005">
    <property type="entry name" value="DNA-directed RNA polymerase"/>
    <property type="match status" value="1"/>
</dbReference>
<dbReference type="FunFam" id="1.10.150.20:FF:000041">
    <property type="entry name" value="DNA-directed RNA polymerase"/>
    <property type="match status" value="1"/>
</dbReference>
<dbReference type="FunFam" id="1.10.287.280:FF:000001">
    <property type="entry name" value="DNA-directed RNA polymerase"/>
    <property type="match status" value="1"/>
</dbReference>
<dbReference type="Gene3D" id="1.10.287.280">
    <property type="match status" value="1"/>
</dbReference>
<dbReference type="Gene3D" id="1.10.150.20">
    <property type="entry name" value="5' to 3' exonuclease, C-terminal subdomain"/>
    <property type="match status" value="1"/>
</dbReference>
<dbReference type="Gene3D" id="1.10.1320.10">
    <property type="entry name" value="DNA-directed RNA polymerase, N-terminal domain"/>
    <property type="match status" value="1"/>
</dbReference>
<dbReference type="InterPro" id="IPR046950">
    <property type="entry name" value="DNA-dir_Rpol_C_phage-type"/>
</dbReference>
<dbReference type="InterPro" id="IPR002092">
    <property type="entry name" value="DNA-dir_Rpol_phage-type"/>
</dbReference>
<dbReference type="InterPro" id="IPR043502">
    <property type="entry name" value="DNA/RNA_pol_sf"/>
</dbReference>
<dbReference type="InterPro" id="IPR037159">
    <property type="entry name" value="RNA_POL_N_sf"/>
</dbReference>
<dbReference type="InterPro" id="IPR029262">
    <property type="entry name" value="RPOL_N"/>
</dbReference>
<dbReference type="PANTHER" id="PTHR10102">
    <property type="entry name" value="DNA-DIRECTED RNA POLYMERASE, MITOCHONDRIAL"/>
    <property type="match status" value="1"/>
</dbReference>
<dbReference type="PANTHER" id="PTHR10102:SF0">
    <property type="entry name" value="DNA-DIRECTED RNA POLYMERASE, MITOCHONDRIAL"/>
    <property type="match status" value="1"/>
</dbReference>
<dbReference type="Pfam" id="PF00940">
    <property type="entry name" value="RNA_pol"/>
    <property type="match status" value="1"/>
</dbReference>
<dbReference type="Pfam" id="PF14700">
    <property type="entry name" value="RPOL_N"/>
    <property type="match status" value="1"/>
</dbReference>
<dbReference type="SMART" id="SM01311">
    <property type="entry name" value="RPOL_N"/>
    <property type="match status" value="1"/>
</dbReference>
<dbReference type="SUPFAM" id="SSF56672">
    <property type="entry name" value="DNA/RNA polymerases"/>
    <property type="match status" value="1"/>
</dbReference>
<dbReference type="PROSITE" id="PS00900">
    <property type="entry name" value="RNA_POL_PHAGE_1"/>
    <property type="match status" value="1"/>
</dbReference>
<dbReference type="PROSITE" id="PS00489">
    <property type="entry name" value="RNA_POL_PHAGE_2"/>
    <property type="match status" value="1"/>
</dbReference>
<reference key="1">
    <citation type="journal article" date="2002" name="Nature">
        <title>The genome sequence of Schizosaccharomyces pombe.</title>
        <authorList>
            <person name="Wood V."/>
            <person name="Gwilliam R."/>
            <person name="Rajandream M.A."/>
            <person name="Lyne M.H."/>
            <person name="Lyne R."/>
            <person name="Stewart A."/>
            <person name="Sgouros J.G."/>
            <person name="Peat N."/>
            <person name="Hayles J."/>
            <person name="Baker S.G."/>
            <person name="Basham D."/>
            <person name="Bowman S."/>
            <person name="Brooks K."/>
            <person name="Brown D."/>
            <person name="Brown S."/>
            <person name="Chillingworth T."/>
            <person name="Churcher C.M."/>
            <person name="Collins M."/>
            <person name="Connor R."/>
            <person name="Cronin A."/>
            <person name="Davis P."/>
            <person name="Feltwell T."/>
            <person name="Fraser A."/>
            <person name="Gentles S."/>
            <person name="Goble A."/>
            <person name="Hamlin N."/>
            <person name="Harris D.E."/>
            <person name="Hidalgo J."/>
            <person name="Hodgson G."/>
            <person name="Holroyd S."/>
            <person name="Hornsby T."/>
            <person name="Howarth S."/>
            <person name="Huckle E.J."/>
            <person name="Hunt S."/>
            <person name="Jagels K."/>
            <person name="James K.D."/>
            <person name="Jones L."/>
            <person name="Jones M."/>
            <person name="Leather S."/>
            <person name="McDonald S."/>
            <person name="McLean J."/>
            <person name="Mooney P."/>
            <person name="Moule S."/>
            <person name="Mungall K.L."/>
            <person name="Murphy L.D."/>
            <person name="Niblett D."/>
            <person name="Odell C."/>
            <person name="Oliver K."/>
            <person name="O'Neil S."/>
            <person name="Pearson D."/>
            <person name="Quail M.A."/>
            <person name="Rabbinowitsch E."/>
            <person name="Rutherford K.M."/>
            <person name="Rutter S."/>
            <person name="Saunders D."/>
            <person name="Seeger K."/>
            <person name="Sharp S."/>
            <person name="Skelton J."/>
            <person name="Simmonds M.N."/>
            <person name="Squares R."/>
            <person name="Squares S."/>
            <person name="Stevens K."/>
            <person name="Taylor K."/>
            <person name="Taylor R.G."/>
            <person name="Tivey A."/>
            <person name="Walsh S.V."/>
            <person name="Warren T."/>
            <person name="Whitehead S."/>
            <person name="Woodward J.R."/>
            <person name="Volckaert G."/>
            <person name="Aert R."/>
            <person name="Robben J."/>
            <person name="Grymonprez B."/>
            <person name="Weltjens I."/>
            <person name="Vanstreels E."/>
            <person name="Rieger M."/>
            <person name="Schaefer M."/>
            <person name="Mueller-Auer S."/>
            <person name="Gabel C."/>
            <person name="Fuchs M."/>
            <person name="Duesterhoeft A."/>
            <person name="Fritzc C."/>
            <person name="Holzer E."/>
            <person name="Moestl D."/>
            <person name="Hilbert H."/>
            <person name="Borzym K."/>
            <person name="Langer I."/>
            <person name="Beck A."/>
            <person name="Lehrach H."/>
            <person name="Reinhardt R."/>
            <person name="Pohl T.M."/>
            <person name="Eger P."/>
            <person name="Zimmermann W."/>
            <person name="Wedler H."/>
            <person name="Wambutt R."/>
            <person name="Purnelle B."/>
            <person name="Goffeau A."/>
            <person name="Cadieu E."/>
            <person name="Dreano S."/>
            <person name="Gloux S."/>
            <person name="Lelaure V."/>
            <person name="Mottier S."/>
            <person name="Galibert F."/>
            <person name="Aves S.J."/>
            <person name="Xiang Z."/>
            <person name="Hunt C."/>
            <person name="Moore K."/>
            <person name="Hurst S.M."/>
            <person name="Lucas M."/>
            <person name="Rochet M."/>
            <person name="Gaillardin C."/>
            <person name="Tallada V.A."/>
            <person name="Garzon A."/>
            <person name="Thode G."/>
            <person name="Daga R.R."/>
            <person name="Cruzado L."/>
            <person name="Jimenez J."/>
            <person name="Sanchez M."/>
            <person name="del Rey F."/>
            <person name="Benito J."/>
            <person name="Dominguez A."/>
            <person name="Revuelta J.L."/>
            <person name="Moreno S."/>
            <person name="Armstrong J."/>
            <person name="Forsburg S.L."/>
            <person name="Cerutti L."/>
            <person name="Lowe T."/>
            <person name="McCombie W.R."/>
            <person name="Paulsen I."/>
            <person name="Potashkin J."/>
            <person name="Shpakovski G.V."/>
            <person name="Ussery D."/>
            <person name="Barrell B.G."/>
            <person name="Nurse P."/>
        </authorList>
    </citation>
    <scope>NUCLEOTIDE SEQUENCE [LARGE SCALE GENOMIC DNA]</scope>
    <source>
        <strain>972 / ATCC 24843</strain>
    </source>
</reference>
<reference key="2">
    <citation type="journal article" date="2011" name="Science">
        <title>Comparative functional genomics of the fission yeasts.</title>
        <authorList>
            <person name="Rhind N."/>
            <person name="Chen Z."/>
            <person name="Yassour M."/>
            <person name="Thompson D.A."/>
            <person name="Haas B.J."/>
            <person name="Habib N."/>
            <person name="Wapinski I."/>
            <person name="Roy S."/>
            <person name="Lin M.F."/>
            <person name="Heiman D.I."/>
            <person name="Young S.K."/>
            <person name="Furuya K."/>
            <person name="Guo Y."/>
            <person name="Pidoux A."/>
            <person name="Chen H.M."/>
            <person name="Robbertse B."/>
            <person name="Goldberg J.M."/>
            <person name="Aoki K."/>
            <person name="Bayne E.H."/>
            <person name="Berlin A.M."/>
            <person name="Desjardins C.A."/>
            <person name="Dobbs E."/>
            <person name="Dukaj L."/>
            <person name="Fan L."/>
            <person name="FitzGerald M.G."/>
            <person name="French C."/>
            <person name="Gujja S."/>
            <person name="Hansen K."/>
            <person name="Keifenheim D."/>
            <person name="Levin J.Z."/>
            <person name="Mosher R.A."/>
            <person name="Mueller C.A."/>
            <person name="Pfiffner J."/>
            <person name="Priest M."/>
            <person name="Russ C."/>
            <person name="Smialowska A."/>
            <person name="Swoboda P."/>
            <person name="Sykes S.M."/>
            <person name="Vaughn M."/>
            <person name="Vengrova S."/>
            <person name="Yoder R."/>
            <person name="Zeng Q."/>
            <person name="Allshire R."/>
            <person name="Baulcombe D."/>
            <person name="Birren B.W."/>
            <person name="Brown W."/>
            <person name="Ekwall K."/>
            <person name="Kellis M."/>
            <person name="Leatherwood J."/>
            <person name="Levin H."/>
            <person name="Margalit H."/>
            <person name="Martienssen R."/>
            <person name="Nieduszynski C.A."/>
            <person name="Spatafora J.W."/>
            <person name="Friedman N."/>
            <person name="Dalgaard J.Z."/>
            <person name="Baumann P."/>
            <person name="Niki H."/>
            <person name="Regev A."/>
            <person name="Nusbaum C."/>
        </authorList>
    </citation>
    <scope>REVISION OF GENE MODEL</scope>
</reference>
<reference key="3">
    <citation type="journal article" date="2011" name="Nucleic Acids Res.">
        <title>Identification and characterization of the mitochondrial RNA polymerase and transcription factor in the fission yeast Schizosaccharomyces pombe.</title>
        <authorList>
            <person name="Jiang H."/>
            <person name="Sun W."/>
            <person name="Wang Z."/>
            <person name="Zhang J."/>
            <person name="Chen D."/>
            <person name="Murchie A.I."/>
        </authorList>
    </citation>
    <scope>FUNCTION</scope>
</reference>
<protein>
    <recommendedName>
        <fullName>DNA-directed RNA polymerase, mitochondrial</fullName>
        <ecNumber>2.7.7.6</ecNumber>
    </recommendedName>
</protein>
<evidence type="ECO:0000250" key="1"/>
<evidence type="ECO:0000255" key="2">
    <source>
        <dbReference type="PROSITE-ProRule" id="PRU10031"/>
    </source>
</evidence>
<evidence type="ECO:0000255" key="3">
    <source>
        <dbReference type="PROSITE-ProRule" id="PRU10032"/>
    </source>
</evidence>
<evidence type="ECO:0000256" key="4">
    <source>
        <dbReference type="SAM" id="MobiDB-lite"/>
    </source>
</evidence>
<evidence type="ECO:0000269" key="5">
    <source>
    </source>
</evidence>
<evidence type="ECO:0000305" key="6"/>
<keyword id="KW-0240">DNA-directed RNA polymerase</keyword>
<keyword id="KW-0496">Mitochondrion</keyword>
<keyword id="KW-0548">Nucleotidyltransferase</keyword>
<keyword id="KW-1185">Reference proteome</keyword>
<keyword id="KW-0804">Transcription</keyword>
<keyword id="KW-0808">Transferase</keyword>
<keyword id="KW-0809">Transit peptide</keyword>
<organism>
    <name type="scientific">Schizosaccharomyces pombe (strain 972 / ATCC 24843)</name>
    <name type="common">Fission yeast</name>
    <dbReference type="NCBI Taxonomy" id="284812"/>
    <lineage>
        <taxon>Eukaryota</taxon>
        <taxon>Fungi</taxon>
        <taxon>Dikarya</taxon>
        <taxon>Ascomycota</taxon>
        <taxon>Taphrinomycotina</taxon>
        <taxon>Schizosaccharomycetes</taxon>
        <taxon>Schizosaccharomycetales</taxon>
        <taxon>Schizosaccharomycetaceae</taxon>
        <taxon>Schizosaccharomyces</taxon>
    </lineage>
</organism>